<keyword id="KW-0067">ATP-binding</keyword>
<keyword id="KW-0414">Isoprene biosynthesis</keyword>
<keyword id="KW-0418">Kinase</keyword>
<keyword id="KW-0547">Nucleotide-binding</keyword>
<keyword id="KW-0808">Transferase</keyword>
<reference key="1">
    <citation type="journal article" date="2007" name="Environ. Microbiol.">
        <title>Whole-genome analysis of the ammonia-oxidizing bacterium, Nitrosomonas eutropha C91: implications for niche adaptation.</title>
        <authorList>
            <person name="Stein L.Y."/>
            <person name="Arp D.J."/>
            <person name="Berube P.M."/>
            <person name="Chain P.S."/>
            <person name="Hauser L."/>
            <person name="Jetten M.S."/>
            <person name="Klotz M.G."/>
            <person name="Larimer F.W."/>
            <person name="Norton J.M."/>
            <person name="Op den Camp H.J.M."/>
            <person name="Shin M."/>
            <person name="Wei X."/>
        </authorList>
    </citation>
    <scope>NUCLEOTIDE SEQUENCE [LARGE SCALE GENOMIC DNA]</scope>
    <source>
        <strain>DSM 101675 / C91 / Nm57</strain>
    </source>
</reference>
<comment type="function">
    <text evidence="1">Catalyzes the phosphorylation of the position 2 hydroxy group of 4-diphosphocytidyl-2C-methyl-D-erythritol.</text>
</comment>
<comment type="catalytic activity">
    <reaction evidence="1">
        <text>4-CDP-2-C-methyl-D-erythritol + ATP = 4-CDP-2-C-methyl-D-erythritol 2-phosphate + ADP + H(+)</text>
        <dbReference type="Rhea" id="RHEA:18437"/>
        <dbReference type="ChEBI" id="CHEBI:15378"/>
        <dbReference type="ChEBI" id="CHEBI:30616"/>
        <dbReference type="ChEBI" id="CHEBI:57823"/>
        <dbReference type="ChEBI" id="CHEBI:57919"/>
        <dbReference type="ChEBI" id="CHEBI:456216"/>
        <dbReference type="EC" id="2.7.1.148"/>
    </reaction>
</comment>
<comment type="pathway">
    <text evidence="1">Isoprenoid biosynthesis; isopentenyl diphosphate biosynthesis via DXP pathway; isopentenyl diphosphate from 1-deoxy-D-xylulose 5-phosphate: step 3/6.</text>
</comment>
<comment type="similarity">
    <text evidence="1">Belongs to the GHMP kinase family. IspE subfamily.</text>
</comment>
<protein>
    <recommendedName>
        <fullName evidence="1">4-diphosphocytidyl-2-C-methyl-D-erythritol kinase</fullName>
        <shortName evidence="1">CMK</shortName>
        <ecNumber evidence="1">2.7.1.148</ecNumber>
    </recommendedName>
    <alternativeName>
        <fullName evidence="1">4-(cytidine-5'-diphospho)-2-C-methyl-D-erythritol kinase</fullName>
    </alternativeName>
</protein>
<evidence type="ECO:0000255" key="1">
    <source>
        <dbReference type="HAMAP-Rule" id="MF_00061"/>
    </source>
</evidence>
<organism>
    <name type="scientific">Nitrosomonas eutropha (strain DSM 101675 / C91 / Nm57)</name>
    <dbReference type="NCBI Taxonomy" id="335283"/>
    <lineage>
        <taxon>Bacteria</taxon>
        <taxon>Pseudomonadati</taxon>
        <taxon>Pseudomonadota</taxon>
        <taxon>Betaproteobacteria</taxon>
        <taxon>Nitrosomonadales</taxon>
        <taxon>Nitrosomonadaceae</taxon>
        <taxon>Nitrosomonas</taxon>
    </lineage>
</organism>
<proteinExistence type="inferred from homology"/>
<dbReference type="EC" id="2.7.1.148" evidence="1"/>
<dbReference type="EMBL" id="CP000450">
    <property type="protein sequence ID" value="ABI59394.1"/>
    <property type="molecule type" value="Genomic_DNA"/>
</dbReference>
<dbReference type="RefSeq" id="WP_011634214.1">
    <property type="nucleotide sequence ID" value="NC_008344.1"/>
</dbReference>
<dbReference type="SMR" id="Q0AGY8"/>
<dbReference type="STRING" id="335283.Neut_1139"/>
<dbReference type="KEGG" id="net:Neut_1139"/>
<dbReference type="eggNOG" id="COG1947">
    <property type="taxonomic scope" value="Bacteria"/>
</dbReference>
<dbReference type="HOGENOM" id="CLU_053057_3_0_4"/>
<dbReference type="OrthoDB" id="9809438at2"/>
<dbReference type="UniPathway" id="UPA00056">
    <property type="reaction ID" value="UER00094"/>
</dbReference>
<dbReference type="Proteomes" id="UP000001966">
    <property type="component" value="Chromosome"/>
</dbReference>
<dbReference type="GO" id="GO:0050515">
    <property type="term" value="F:4-(cytidine 5'-diphospho)-2-C-methyl-D-erythritol kinase activity"/>
    <property type="evidence" value="ECO:0007669"/>
    <property type="project" value="UniProtKB-UniRule"/>
</dbReference>
<dbReference type="GO" id="GO:0005524">
    <property type="term" value="F:ATP binding"/>
    <property type="evidence" value="ECO:0007669"/>
    <property type="project" value="UniProtKB-UniRule"/>
</dbReference>
<dbReference type="GO" id="GO:0019288">
    <property type="term" value="P:isopentenyl diphosphate biosynthetic process, methylerythritol 4-phosphate pathway"/>
    <property type="evidence" value="ECO:0007669"/>
    <property type="project" value="UniProtKB-UniRule"/>
</dbReference>
<dbReference type="GO" id="GO:0016114">
    <property type="term" value="P:terpenoid biosynthetic process"/>
    <property type="evidence" value="ECO:0007669"/>
    <property type="project" value="InterPro"/>
</dbReference>
<dbReference type="Gene3D" id="3.30.230.10">
    <property type="match status" value="1"/>
</dbReference>
<dbReference type="Gene3D" id="3.30.70.890">
    <property type="entry name" value="GHMP kinase, C-terminal domain"/>
    <property type="match status" value="1"/>
</dbReference>
<dbReference type="HAMAP" id="MF_00061">
    <property type="entry name" value="IspE"/>
    <property type="match status" value="1"/>
</dbReference>
<dbReference type="InterPro" id="IPR013750">
    <property type="entry name" value="GHMP_kinase_C_dom"/>
</dbReference>
<dbReference type="InterPro" id="IPR036554">
    <property type="entry name" value="GHMP_kinase_C_sf"/>
</dbReference>
<dbReference type="InterPro" id="IPR006204">
    <property type="entry name" value="GHMP_kinase_N_dom"/>
</dbReference>
<dbReference type="InterPro" id="IPR004424">
    <property type="entry name" value="IspE"/>
</dbReference>
<dbReference type="InterPro" id="IPR020568">
    <property type="entry name" value="Ribosomal_Su5_D2-typ_SF"/>
</dbReference>
<dbReference type="InterPro" id="IPR014721">
    <property type="entry name" value="Ribsml_uS5_D2-typ_fold_subgr"/>
</dbReference>
<dbReference type="NCBIfam" id="TIGR00154">
    <property type="entry name" value="ispE"/>
    <property type="match status" value="1"/>
</dbReference>
<dbReference type="NCBIfam" id="NF011202">
    <property type="entry name" value="PRK14608.1"/>
    <property type="match status" value="1"/>
</dbReference>
<dbReference type="PANTHER" id="PTHR43527">
    <property type="entry name" value="4-DIPHOSPHOCYTIDYL-2-C-METHYL-D-ERYTHRITOL KINASE, CHLOROPLASTIC"/>
    <property type="match status" value="1"/>
</dbReference>
<dbReference type="PANTHER" id="PTHR43527:SF2">
    <property type="entry name" value="4-DIPHOSPHOCYTIDYL-2-C-METHYL-D-ERYTHRITOL KINASE, CHLOROPLASTIC"/>
    <property type="match status" value="1"/>
</dbReference>
<dbReference type="Pfam" id="PF08544">
    <property type="entry name" value="GHMP_kinases_C"/>
    <property type="match status" value="1"/>
</dbReference>
<dbReference type="Pfam" id="PF00288">
    <property type="entry name" value="GHMP_kinases_N"/>
    <property type="match status" value="1"/>
</dbReference>
<dbReference type="PIRSF" id="PIRSF010376">
    <property type="entry name" value="IspE"/>
    <property type="match status" value="1"/>
</dbReference>
<dbReference type="SUPFAM" id="SSF55060">
    <property type="entry name" value="GHMP Kinase, C-terminal domain"/>
    <property type="match status" value="1"/>
</dbReference>
<dbReference type="SUPFAM" id="SSF54211">
    <property type="entry name" value="Ribosomal protein S5 domain 2-like"/>
    <property type="match status" value="1"/>
</dbReference>
<feature type="chain" id="PRO_0000335732" description="4-diphosphocytidyl-2-C-methyl-D-erythritol kinase">
    <location>
        <begin position="1"/>
        <end position="278"/>
    </location>
</feature>
<feature type="active site" evidence="1">
    <location>
        <position position="9"/>
    </location>
</feature>
<feature type="active site" evidence="1">
    <location>
        <position position="135"/>
    </location>
</feature>
<feature type="binding site" evidence="1">
    <location>
        <begin position="93"/>
        <end position="103"/>
    </location>
    <ligand>
        <name>ATP</name>
        <dbReference type="ChEBI" id="CHEBI:30616"/>
    </ligand>
</feature>
<gene>
    <name evidence="1" type="primary">ispE</name>
    <name type="ordered locus">Neut_1139</name>
</gene>
<sequence>MNTFPAPAKLNLFLHVIGRRDDGYHLLQTVFRFIGYSDQLGFDVTNDGVIRHLNLVPGLTDTDDLCVRAAKLLQKRSGKEMLGVGIHLSKNIPLGGGLGGGSSDAATTLIVLNRLWGINWGRERLMALGLELGADVPIFIYGRNAFAEGVGEKLEVINLPPAWYVVLTPPAPISTAAVFASRELTRNTIPIKMAAFSMAQGHNDLELVAMRLQPVIAEWLDWLKGRHGSTKVAMSGSGSCVFAEFPSESAAREVLRQLPDSMSGFIAPGLARHPLSDF</sequence>
<name>ISPE_NITEC</name>
<accession>Q0AGY8</accession>